<proteinExistence type="inferred from homology"/>
<protein>
    <recommendedName>
        <fullName evidence="1">Protein-export protein SecB</fullName>
    </recommendedName>
</protein>
<feature type="chain" id="PRO_1000148695" description="Protein-export protein SecB">
    <location>
        <begin position="1"/>
        <end position="163"/>
    </location>
</feature>
<comment type="function">
    <text evidence="1">One of the proteins required for the normal export of preproteins out of the cell cytoplasm. It is a molecular chaperone that binds to a subset of precursor proteins, maintaining them in a translocation-competent state. It also specifically binds to its receptor SecA.</text>
</comment>
<comment type="subunit">
    <text evidence="1">Homotetramer, a dimer of dimers. One homotetramer interacts with 1 SecA dimer.</text>
</comment>
<comment type="subcellular location">
    <subcellularLocation>
        <location evidence="1">Cytoplasm</location>
    </subcellularLocation>
</comment>
<comment type="similarity">
    <text evidence="1">Belongs to the SecB family.</text>
</comment>
<dbReference type="EMBL" id="CP001488">
    <property type="protein sequence ID" value="ACO01782.1"/>
    <property type="molecule type" value="Genomic_DNA"/>
</dbReference>
<dbReference type="RefSeq" id="WP_002965136.1">
    <property type="nucleotide sequence ID" value="NC_012441.1"/>
</dbReference>
<dbReference type="SMR" id="C0RFW0"/>
<dbReference type="GeneID" id="97534666"/>
<dbReference type="KEGG" id="bmi:BMEA_A2134"/>
<dbReference type="HOGENOM" id="CLU_111574_0_0_5"/>
<dbReference type="Proteomes" id="UP000001748">
    <property type="component" value="Chromosome I"/>
</dbReference>
<dbReference type="GO" id="GO:0005737">
    <property type="term" value="C:cytoplasm"/>
    <property type="evidence" value="ECO:0007669"/>
    <property type="project" value="UniProtKB-SubCell"/>
</dbReference>
<dbReference type="GO" id="GO:0051082">
    <property type="term" value="F:unfolded protein binding"/>
    <property type="evidence" value="ECO:0007669"/>
    <property type="project" value="InterPro"/>
</dbReference>
<dbReference type="GO" id="GO:0006457">
    <property type="term" value="P:protein folding"/>
    <property type="evidence" value="ECO:0007669"/>
    <property type="project" value="UniProtKB-UniRule"/>
</dbReference>
<dbReference type="GO" id="GO:0051262">
    <property type="term" value="P:protein tetramerization"/>
    <property type="evidence" value="ECO:0007669"/>
    <property type="project" value="InterPro"/>
</dbReference>
<dbReference type="GO" id="GO:0015031">
    <property type="term" value="P:protein transport"/>
    <property type="evidence" value="ECO:0007669"/>
    <property type="project" value="UniProtKB-UniRule"/>
</dbReference>
<dbReference type="Gene3D" id="3.10.420.10">
    <property type="entry name" value="SecB-like"/>
    <property type="match status" value="1"/>
</dbReference>
<dbReference type="HAMAP" id="MF_00821">
    <property type="entry name" value="SecB"/>
    <property type="match status" value="1"/>
</dbReference>
<dbReference type="InterPro" id="IPR003708">
    <property type="entry name" value="SecB"/>
</dbReference>
<dbReference type="InterPro" id="IPR035958">
    <property type="entry name" value="SecB-like_sf"/>
</dbReference>
<dbReference type="NCBIfam" id="NF004392">
    <property type="entry name" value="PRK05751.1-3"/>
    <property type="match status" value="1"/>
</dbReference>
<dbReference type="NCBIfam" id="TIGR00809">
    <property type="entry name" value="secB"/>
    <property type="match status" value="1"/>
</dbReference>
<dbReference type="PANTHER" id="PTHR36918">
    <property type="match status" value="1"/>
</dbReference>
<dbReference type="PANTHER" id="PTHR36918:SF1">
    <property type="entry name" value="PROTEIN-EXPORT PROTEIN SECB"/>
    <property type="match status" value="1"/>
</dbReference>
<dbReference type="Pfam" id="PF02556">
    <property type="entry name" value="SecB"/>
    <property type="match status" value="1"/>
</dbReference>
<dbReference type="PRINTS" id="PR01594">
    <property type="entry name" value="SECBCHAPRONE"/>
</dbReference>
<dbReference type="SUPFAM" id="SSF54611">
    <property type="entry name" value="SecB-like"/>
    <property type="match status" value="1"/>
</dbReference>
<keyword id="KW-0143">Chaperone</keyword>
<keyword id="KW-0963">Cytoplasm</keyword>
<keyword id="KW-0653">Protein transport</keyword>
<keyword id="KW-0811">Translocation</keyword>
<keyword id="KW-0813">Transport</keyword>
<sequence length="163" mass="17878">MSDKAAGETKNGNGATTEPSLNILAQYVKDLSFESPGAPLSLRPREKAPSININVNVNANPLSETDFDVVLTLEAKAVDGKDILFNTELVYGGVFRIQGIPQEHMLPLLFIECPRLLFPFARQIIADATRNGGYPPLMIDPIDFAQMFQQRMAEEQAKSAVKS</sequence>
<organism>
    <name type="scientific">Brucella melitensis biotype 2 (strain ATCC 23457)</name>
    <dbReference type="NCBI Taxonomy" id="546272"/>
    <lineage>
        <taxon>Bacteria</taxon>
        <taxon>Pseudomonadati</taxon>
        <taxon>Pseudomonadota</taxon>
        <taxon>Alphaproteobacteria</taxon>
        <taxon>Hyphomicrobiales</taxon>
        <taxon>Brucellaceae</taxon>
        <taxon>Brucella/Ochrobactrum group</taxon>
        <taxon>Brucella</taxon>
    </lineage>
</organism>
<reference key="1">
    <citation type="submission" date="2009-03" db="EMBL/GenBank/DDBJ databases">
        <title>Brucella melitensis ATCC 23457 whole genome shotgun sequencing project.</title>
        <authorList>
            <person name="Setubal J.C."/>
            <person name="Boyle S."/>
            <person name="Crasta O.R."/>
            <person name="Gillespie J.J."/>
            <person name="Kenyon R.W."/>
            <person name="Lu J."/>
            <person name="Mane S."/>
            <person name="Nagrani S."/>
            <person name="Shallom J.M."/>
            <person name="Shallom S."/>
            <person name="Shukla M."/>
            <person name="Snyder E.E."/>
            <person name="Sobral B.W."/>
            <person name="Wattam A.R."/>
            <person name="Will R."/>
            <person name="Williams K."/>
            <person name="Yoo H."/>
            <person name="Munk C."/>
            <person name="Tapia R."/>
            <person name="Han C."/>
            <person name="Detter J.C."/>
            <person name="Bruce D."/>
            <person name="Brettin T.S."/>
        </authorList>
    </citation>
    <scope>NUCLEOTIDE SEQUENCE [LARGE SCALE GENOMIC DNA]</scope>
    <source>
        <strain>ATCC 23457</strain>
    </source>
</reference>
<accession>C0RFW0</accession>
<name>SECB_BRUMB</name>
<gene>
    <name evidence="1" type="primary">secB</name>
    <name type="ordered locus">BMEA_A2134</name>
</gene>
<evidence type="ECO:0000255" key="1">
    <source>
        <dbReference type="HAMAP-Rule" id="MF_00821"/>
    </source>
</evidence>